<evidence type="ECO:0000255" key="1">
    <source>
        <dbReference type="HAMAP-Rule" id="MF_00281"/>
    </source>
</evidence>
<sequence>MNLKEKLAELKEQGLAEIKEAKDLKKINDIRVSLLGKKGPITEVLRGMRDLSAEERPKVGQFANAIRDELTQALADKKDEIEVIKMAKKLEKETIDVTLPGVPVTTGNTHIITQIIDQIEKLFLGMGFQVVDGPEVEEDHYNFEMLNLPQDHPARDMQDTFYITEKILMRTQTSPVQARTMEKHDFSKGPLKMISPGKVYRRDTDDATHSHQFHQVEGLVIDKHITMADLKGTLQLIARTIFGEDREIRMRPSYFPFTEPSAEIDVSCFKCNGKGCSVCKYTGWIEVLGAGMVHPNVLEMAGVDSNVYGGFAFGLGPDRFAMLKYGVDDIREFYLNDVRFLSQFSQKG</sequence>
<protein>
    <recommendedName>
        <fullName evidence="1">Phenylalanine--tRNA ligase alpha subunit</fullName>
        <ecNumber evidence="1">6.1.1.20</ecNumber>
    </recommendedName>
    <alternativeName>
        <fullName evidence="1">Phenylalanyl-tRNA synthetase alpha subunit</fullName>
        <shortName evidence="1">PheRS</shortName>
    </alternativeName>
</protein>
<accession>Q1WTY9</accession>
<name>SYFA_LIGS1</name>
<dbReference type="EC" id="6.1.1.20" evidence="1"/>
<dbReference type="EMBL" id="CP000233">
    <property type="protein sequence ID" value="ABD99623.1"/>
    <property type="molecule type" value="Genomic_DNA"/>
</dbReference>
<dbReference type="RefSeq" id="WP_003700137.1">
    <property type="nucleotide sequence ID" value="NC_007929.1"/>
</dbReference>
<dbReference type="RefSeq" id="YP_535706.1">
    <property type="nucleotide sequence ID" value="NC_007929.1"/>
</dbReference>
<dbReference type="SMR" id="Q1WTY9"/>
<dbReference type="STRING" id="362948.LSL_0813"/>
<dbReference type="GeneID" id="89465595"/>
<dbReference type="KEGG" id="lsl:LSL_0813"/>
<dbReference type="PATRIC" id="fig|362948.14.peg.887"/>
<dbReference type="HOGENOM" id="CLU_025086_0_1_9"/>
<dbReference type="OrthoDB" id="9800719at2"/>
<dbReference type="Proteomes" id="UP000006559">
    <property type="component" value="Chromosome"/>
</dbReference>
<dbReference type="GO" id="GO:0005737">
    <property type="term" value="C:cytoplasm"/>
    <property type="evidence" value="ECO:0007669"/>
    <property type="project" value="UniProtKB-SubCell"/>
</dbReference>
<dbReference type="GO" id="GO:0005524">
    <property type="term" value="F:ATP binding"/>
    <property type="evidence" value="ECO:0007669"/>
    <property type="project" value="UniProtKB-UniRule"/>
</dbReference>
<dbReference type="GO" id="GO:0140096">
    <property type="term" value="F:catalytic activity, acting on a protein"/>
    <property type="evidence" value="ECO:0007669"/>
    <property type="project" value="UniProtKB-ARBA"/>
</dbReference>
<dbReference type="GO" id="GO:0000287">
    <property type="term" value="F:magnesium ion binding"/>
    <property type="evidence" value="ECO:0007669"/>
    <property type="project" value="UniProtKB-UniRule"/>
</dbReference>
<dbReference type="GO" id="GO:0004826">
    <property type="term" value="F:phenylalanine-tRNA ligase activity"/>
    <property type="evidence" value="ECO:0007669"/>
    <property type="project" value="UniProtKB-UniRule"/>
</dbReference>
<dbReference type="GO" id="GO:0016740">
    <property type="term" value="F:transferase activity"/>
    <property type="evidence" value="ECO:0007669"/>
    <property type="project" value="UniProtKB-ARBA"/>
</dbReference>
<dbReference type="GO" id="GO:0000049">
    <property type="term" value="F:tRNA binding"/>
    <property type="evidence" value="ECO:0007669"/>
    <property type="project" value="InterPro"/>
</dbReference>
<dbReference type="GO" id="GO:0006432">
    <property type="term" value="P:phenylalanyl-tRNA aminoacylation"/>
    <property type="evidence" value="ECO:0007669"/>
    <property type="project" value="UniProtKB-UniRule"/>
</dbReference>
<dbReference type="CDD" id="cd00496">
    <property type="entry name" value="PheRS_alpha_core"/>
    <property type="match status" value="1"/>
</dbReference>
<dbReference type="FunFam" id="3.30.930.10:FF:000003">
    <property type="entry name" value="Phenylalanine--tRNA ligase alpha subunit"/>
    <property type="match status" value="1"/>
</dbReference>
<dbReference type="Gene3D" id="3.30.930.10">
    <property type="entry name" value="Bira Bifunctional Protein, Domain 2"/>
    <property type="match status" value="1"/>
</dbReference>
<dbReference type="HAMAP" id="MF_00281">
    <property type="entry name" value="Phe_tRNA_synth_alpha1"/>
    <property type="match status" value="1"/>
</dbReference>
<dbReference type="InterPro" id="IPR006195">
    <property type="entry name" value="aa-tRNA-synth_II"/>
</dbReference>
<dbReference type="InterPro" id="IPR045864">
    <property type="entry name" value="aa-tRNA-synth_II/BPL/LPL"/>
</dbReference>
<dbReference type="InterPro" id="IPR004529">
    <property type="entry name" value="Phe-tRNA-synth_IIc_asu"/>
</dbReference>
<dbReference type="InterPro" id="IPR004188">
    <property type="entry name" value="Phe-tRNA_ligase_II_N"/>
</dbReference>
<dbReference type="InterPro" id="IPR022911">
    <property type="entry name" value="Phe_tRNA_ligase_alpha1_bac"/>
</dbReference>
<dbReference type="InterPro" id="IPR002319">
    <property type="entry name" value="Phenylalanyl-tRNA_Synthase"/>
</dbReference>
<dbReference type="InterPro" id="IPR010978">
    <property type="entry name" value="tRNA-bd_arm"/>
</dbReference>
<dbReference type="NCBIfam" id="TIGR00468">
    <property type="entry name" value="pheS"/>
    <property type="match status" value="1"/>
</dbReference>
<dbReference type="PANTHER" id="PTHR11538:SF41">
    <property type="entry name" value="PHENYLALANINE--TRNA LIGASE, MITOCHONDRIAL"/>
    <property type="match status" value="1"/>
</dbReference>
<dbReference type="PANTHER" id="PTHR11538">
    <property type="entry name" value="PHENYLALANYL-TRNA SYNTHETASE"/>
    <property type="match status" value="1"/>
</dbReference>
<dbReference type="Pfam" id="PF02912">
    <property type="entry name" value="Phe_tRNA-synt_N"/>
    <property type="match status" value="1"/>
</dbReference>
<dbReference type="Pfam" id="PF01409">
    <property type="entry name" value="tRNA-synt_2d"/>
    <property type="match status" value="1"/>
</dbReference>
<dbReference type="SUPFAM" id="SSF55681">
    <property type="entry name" value="Class II aaRS and biotin synthetases"/>
    <property type="match status" value="1"/>
</dbReference>
<dbReference type="SUPFAM" id="SSF46589">
    <property type="entry name" value="tRNA-binding arm"/>
    <property type="match status" value="1"/>
</dbReference>
<dbReference type="PROSITE" id="PS50862">
    <property type="entry name" value="AA_TRNA_LIGASE_II"/>
    <property type="match status" value="1"/>
</dbReference>
<gene>
    <name evidence="1" type="primary">pheS</name>
    <name type="ordered locus">LSL_0813</name>
</gene>
<comment type="catalytic activity">
    <reaction evidence="1">
        <text>tRNA(Phe) + L-phenylalanine + ATP = L-phenylalanyl-tRNA(Phe) + AMP + diphosphate + H(+)</text>
        <dbReference type="Rhea" id="RHEA:19413"/>
        <dbReference type="Rhea" id="RHEA-COMP:9668"/>
        <dbReference type="Rhea" id="RHEA-COMP:9699"/>
        <dbReference type="ChEBI" id="CHEBI:15378"/>
        <dbReference type="ChEBI" id="CHEBI:30616"/>
        <dbReference type="ChEBI" id="CHEBI:33019"/>
        <dbReference type="ChEBI" id="CHEBI:58095"/>
        <dbReference type="ChEBI" id="CHEBI:78442"/>
        <dbReference type="ChEBI" id="CHEBI:78531"/>
        <dbReference type="ChEBI" id="CHEBI:456215"/>
        <dbReference type="EC" id="6.1.1.20"/>
    </reaction>
</comment>
<comment type="cofactor">
    <cofactor evidence="1">
        <name>Mg(2+)</name>
        <dbReference type="ChEBI" id="CHEBI:18420"/>
    </cofactor>
    <text evidence="1">Binds 2 magnesium ions per tetramer.</text>
</comment>
<comment type="subunit">
    <text evidence="1">Tetramer of two alpha and two beta subunits.</text>
</comment>
<comment type="subcellular location">
    <subcellularLocation>
        <location evidence="1">Cytoplasm</location>
    </subcellularLocation>
</comment>
<comment type="similarity">
    <text evidence="1">Belongs to the class-II aminoacyl-tRNA synthetase family. Phe-tRNA synthetase alpha subunit type 1 subfamily.</text>
</comment>
<reference key="1">
    <citation type="journal article" date="2006" name="Proc. Natl. Acad. Sci. U.S.A.">
        <title>Multireplicon genome architecture of Lactobacillus salivarius.</title>
        <authorList>
            <person name="Claesson M.J."/>
            <person name="Li Y."/>
            <person name="Leahy S."/>
            <person name="Canchaya C."/>
            <person name="van Pijkeren J.P."/>
            <person name="Cerdeno-Tarraga A.M."/>
            <person name="Parkhill J."/>
            <person name="Flynn S."/>
            <person name="O'Sullivan G.C."/>
            <person name="Collins J.K."/>
            <person name="Higgins D."/>
            <person name="Shanahan F."/>
            <person name="Fitzgerald G.F."/>
            <person name="van Sinderen D."/>
            <person name="O'Toole P.W."/>
        </authorList>
    </citation>
    <scope>NUCLEOTIDE SEQUENCE [LARGE SCALE GENOMIC DNA]</scope>
    <source>
        <strain>UCC118</strain>
    </source>
</reference>
<organism>
    <name type="scientific">Ligilactobacillus salivarius (strain UCC118)</name>
    <name type="common">Lactobacillus salivarius</name>
    <dbReference type="NCBI Taxonomy" id="362948"/>
    <lineage>
        <taxon>Bacteria</taxon>
        <taxon>Bacillati</taxon>
        <taxon>Bacillota</taxon>
        <taxon>Bacilli</taxon>
        <taxon>Lactobacillales</taxon>
        <taxon>Lactobacillaceae</taxon>
        <taxon>Ligilactobacillus</taxon>
    </lineage>
</organism>
<proteinExistence type="inferred from homology"/>
<keyword id="KW-0030">Aminoacyl-tRNA synthetase</keyword>
<keyword id="KW-0067">ATP-binding</keyword>
<keyword id="KW-0963">Cytoplasm</keyword>
<keyword id="KW-0436">Ligase</keyword>
<keyword id="KW-0460">Magnesium</keyword>
<keyword id="KW-0479">Metal-binding</keyword>
<keyword id="KW-0547">Nucleotide-binding</keyword>
<keyword id="KW-0648">Protein biosynthesis</keyword>
<keyword id="KW-1185">Reference proteome</keyword>
<feature type="chain" id="PRO_1000006852" description="Phenylalanine--tRNA ligase alpha subunit">
    <location>
        <begin position="1"/>
        <end position="348"/>
    </location>
</feature>
<feature type="binding site" evidence="1">
    <location>
        <position position="259"/>
    </location>
    <ligand>
        <name>Mg(2+)</name>
        <dbReference type="ChEBI" id="CHEBI:18420"/>
        <note>shared with beta subunit</note>
    </ligand>
</feature>